<gene>
    <name evidence="1" type="primary">rplR</name>
    <name type="ordered locus">BMEI0773</name>
</gene>
<organism>
    <name type="scientific">Brucella melitensis biotype 1 (strain ATCC 23456 / CCUG 17765 / NCTC 10094 / 16M)</name>
    <dbReference type="NCBI Taxonomy" id="224914"/>
    <lineage>
        <taxon>Bacteria</taxon>
        <taxon>Pseudomonadati</taxon>
        <taxon>Pseudomonadota</taxon>
        <taxon>Alphaproteobacteria</taxon>
        <taxon>Hyphomicrobiales</taxon>
        <taxon>Brucellaceae</taxon>
        <taxon>Brucella/Ochrobactrum group</taxon>
        <taxon>Brucella</taxon>
    </lineage>
</organism>
<reference key="1">
    <citation type="journal article" date="2002" name="Proc. Natl. Acad. Sci. U.S.A.">
        <title>The genome sequence of the facultative intracellular pathogen Brucella melitensis.</title>
        <authorList>
            <person name="DelVecchio V.G."/>
            <person name="Kapatral V."/>
            <person name="Redkar R.J."/>
            <person name="Patra G."/>
            <person name="Mujer C."/>
            <person name="Los T."/>
            <person name="Ivanova N."/>
            <person name="Anderson I."/>
            <person name="Bhattacharyya A."/>
            <person name="Lykidis A."/>
            <person name="Reznik G."/>
            <person name="Jablonski L."/>
            <person name="Larsen N."/>
            <person name="D'Souza M."/>
            <person name="Bernal A."/>
            <person name="Mazur M."/>
            <person name="Goltsman E."/>
            <person name="Selkov E."/>
            <person name="Elzer P.H."/>
            <person name="Hagius S."/>
            <person name="O'Callaghan D."/>
            <person name="Letesson J.-J."/>
            <person name="Haselkorn R."/>
            <person name="Kyrpides N.C."/>
            <person name="Overbeek R."/>
        </authorList>
    </citation>
    <scope>NUCLEOTIDE SEQUENCE [LARGE SCALE GENOMIC DNA]</scope>
    <source>
        <strain>ATCC 23456 / CCUG 17765 / NCTC 10094 / 16M</strain>
    </source>
</reference>
<feature type="chain" id="PRO_0000131229" description="Large ribosomal subunit protein uL18">
    <location>
        <begin position="1"/>
        <end position="120"/>
    </location>
</feature>
<proteinExistence type="inferred from homology"/>
<sequence length="120" mass="12669">MASPKETLQRRAARVRRQVKAVANGRPRLSVHRSSKNIYAQIIDDVRGVTLAAASTLDGDLKGKLKTGADSAAAAAVGKLVAERAVKAGVKDVVFDRGAFIYHGRVKALAEAAREGGLSF</sequence>
<dbReference type="EMBL" id="AE008917">
    <property type="protein sequence ID" value="AAL51954.1"/>
    <property type="molecule type" value="Genomic_DNA"/>
</dbReference>
<dbReference type="PIR" id="AG3348">
    <property type="entry name" value="AG3348"/>
</dbReference>
<dbReference type="RefSeq" id="WP_002964346.1">
    <property type="nucleotide sequence ID" value="NZ_GG703780.1"/>
</dbReference>
<dbReference type="SMR" id="Q8YHM4"/>
<dbReference type="GeneID" id="97533540"/>
<dbReference type="KEGG" id="bme:BMEI0773"/>
<dbReference type="KEGG" id="bmel:DK63_649"/>
<dbReference type="PATRIC" id="fig|224914.52.peg.680"/>
<dbReference type="eggNOG" id="COG0256">
    <property type="taxonomic scope" value="Bacteria"/>
</dbReference>
<dbReference type="PhylomeDB" id="Q8YHM4"/>
<dbReference type="Proteomes" id="UP000000419">
    <property type="component" value="Chromosome I"/>
</dbReference>
<dbReference type="GO" id="GO:0022625">
    <property type="term" value="C:cytosolic large ribosomal subunit"/>
    <property type="evidence" value="ECO:0007669"/>
    <property type="project" value="TreeGrafter"/>
</dbReference>
<dbReference type="GO" id="GO:0008097">
    <property type="term" value="F:5S rRNA binding"/>
    <property type="evidence" value="ECO:0007669"/>
    <property type="project" value="TreeGrafter"/>
</dbReference>
<dbReference type="GO" id="GO:0003735">
    <property type="term" value="F:structural constituent of ribosome"/>
    <property type="evidence" value="ECO:0007669"/>
    <property type="project" value="InterPro"/>
</dbReference>
<dbReference type="GO" id="GO:0006412">
    <property type="term" value="P:translation"/>
    <property type="evidence" value="ECO:0007669"/>
    <property type="project" value="UniProtKB-UniRule"/>
</dbReference>
<dbReference type="CDD" id="cd00432">
    <property type="entry name" value="Ribosomal_L18_L5e"/>
    <property type="match status" value="1"/>
</dbReference>
<dbReference type="FunFam" id="3.30.420.100:FF:000001">
    <property type="entry name" value="50S ribosomal protein L18"/>
    <property type="match status" value="1"/>
</dbReference>
<dbReference type="Gene3D" id="3.30.420.100">
    <property type="match status" value="1"/>
</dbReference>
<dbReference type="HAMAP" id="MF_01337_B">
    <property type="entry name" value="Ribosomal_uL18_B"/>
    <property type="match status" value="1"/>
</dbReference>
<dbReference type="InterPro" id="IPR004389">
    <property type="entry name" value="Ribosomal_uL18_bac-type"/>
</dbReference>
<dbReference type="InterPro" id="IPR005484">
    <property type="entry name" value="Ribosomal_uL18_bac/euk"/>
</dbReference>
<dbReference type="NCBIfam" id="TIGR00060">
    <property type="entry name" value="L18_bact"/>
    <property type="match status" value="1"/>
</dbReference>
<dbReference type="PANTHER" id="PTHR12899">
    <property type="entry name" value="39S RIBOSOMAL PROTEIN L18, MITOCHONDRIAL"/>
    <property type="match status" value="1"/>
</dbReference>
<dbReference type="PANTHER" id="PTHR12899:SF3">
    <property type="entry name" value="LARGE RIBOSOMAL SUBUNIT PROTEIN UL18M"/>
    <property type="match status" value="1"/>
</dbReference>
<dbReference type="Pfam" id="PF00861">
    <property type="entry name" value="Ribosomal_L18p"/>
    <property type="match status" value="1"/>
</dbReference>
<dbReference type="SUPFAM" id="SSF53137">
    <property type="entry name" value="Translational machinery components"/>
    <property type="match status" value="1"/>
</dbReference>
<accession>Q8YHM4</accession>
<keyword id="KW-0687">Ribonucleoprotein</keyword>
<keyword id="KW-0689">Ribosomal protein</keyword>
<keyword id="KW-0694">RNA-binding</keyword>
<keyword id="KW-0699">rRNA-binding</keyword>
<evidence type="ECO:0000255" key="1">
    <source>
        <dbReference type="HAMAP-Rule" id="MF_01337"/>
    </source>
</evidence>
<evidence type="ECO:0000305" key="2"/>
<comment type="function">
    <text evidence="1">This is one of the proteins that bind and probably mediate the attachment of the 5S RNA into the large ribosomal subunit, where it forms part of the central protuberance.</text>
</comment>
<comment type="subunit">
    <text evidence="1">Part of the 50S ribosomal subunit; part of the 5S rRNA/L5/L18/L25 subcomplex. Contacts the 5S and 23S rRNAs.</text>
</comment>
<comment type="similarity">
    <text evidence="1">Belongs to the universal ribosomal protein uL18 family.</text>
</comment>
<protein>
    <recommendedName>
        <fullName evidence="1">Large ribosomal subunit protein uL18</fullName>
    </recommendedName>
    <alternativeName>
        <fullName evidence="2">50S ribosomal protein L18</fullName>
    </alternativeName>
</protein>
<name>RL18_BRUME</name>